<reference key="1">
    <citation type="journal article" date="2007" name="PLoS Genet.">
        <title>Genome analysis of Minibacterium massiliensis highlights the convergent evolution of water-living bacteria.</title>
        <authorList>
            <person name="Audic S."/>
            <person name="Robert C."/>
            <person name="Campagna B."/>
            <person name="Parinello H."/>
            <person name="Claverie J.-M."/>
            <person name="Raoult D."/>
            <person name="Drancourt M."/>
        </authorList>
    </citation>
    <scope>NUCLEOTIDE SEQUENCE [LARGE SCALE GENOMIC DNA]</scope>
    <source>
        <strain>Marseille</strain>
    </source>
</reference>
<proteinExistence type="inferred from homology"/>
<name>RPOC_JANMA</name>
<feature type="chain" id="PRO_0000308838" description="DNA-directed RNA polymerase subunit beta'">
    <location>
        <begin position="1"/>
        <end position="1414"/>
    </location>
</feature>
<feature type="region of interest" description="Disordered" evidence="2">
    <location>
        <begin position="1395"/>
        <end position="1414"/>
    </location>
</feature>
<feature type="binding site" evidence="1">
    <location>
        <position position="70"/>
    </location>
    <ligand>
        <name>Zn(2+)</name>
        <dbReference type="ChEBI" id="CHEBI:29105"/>
        <label>1</label>
    </ligand>
</feature>
<feature type="binding site" evidence="1">
    <location>
        <position position="72"/>
    </location>
    <ligand>
        <name>Zn(2+)</name>
        <dbReference type="ChEBI" id="CHEBI:29105"/>
        <label>1</label>
    </ligand>
</feature>
<feature type="binding site" evidence="1">
    <location>
        <position position="85"/>
    </location>
    <ligand>
        <name>Zn(2+)</name>
        <dbReference type="ChEBI" id="CHEBI:29105"/>
        <label>1</label>
    </ligand>
</feature>
<feature type="binding site" evidence="1">
    <location>
        <position position="88"/>
    </location>
    <ligand>
        <name>Zn(2+)</name>
        <dbReference type="ChEBI" id="CHEBI:29105"/>
        <label>1</label>
    </ligand>
</feature>
<feature type="binding site" evidence="1">
    <location>
        <position position="460"/>
    </location>
    <ligand>
        <name>Mg(2+)</name>
        <dbReference type="ChEBI" id="CHEBI:18420"/>
    </ligand>
</feature>
<feature type="binding site" evidence="1">
    <location>
        <position position="462"/>
    </location>
    <ligand>
        <name>Mg(2+)</name>
        <dbReference type="ChEBI" id="CHEBI:18420"/>
    </ligand>
</feature>
<feature type="binding site" evidence="1">
    <location>
        <position position="464"/>
    </location>
    <ligand>
        <name>Mg(2+)</name>
        <dbReference type="ChEBI" id="CHEBI:18420"/>
    </ligand>
</feature>
<feature type="binding site" evidence="1">
    <location>
        <position position="815"/>
    </location>
    <ligand>
        <name>Zn(2+)</name>
        <dbReference type="ChEBI" id="CHEBI:29105"/>
        <label>2</label>
    </ligand>
</feature>
<feature type="binding site" evidence="1">
    <location>
        <position position="889"/>
    </location>
    <ligand>
        <name>Zn(2+)</name>
        <dbReference type="ChEBI" id="CHEBI:29105"/>
        <label>2</label>
    </ligand>
</feature>
<feature type="binding site" evidence="1">
    <location>
        <position position="896"/>
    </location>
    <ligand>
        <name>Zn(2+)</name>
        <dbReference type="ChEBI" id="CHEBI:29105"/>
        <label>2</label>
    </ligand>
</feature>
<feature type="binding site" evidence="1">
    <location>
        <position position="899"/>
    </location>
    <ligand>
        <name>Zn(2+)</name>
        <dbReference type="ChEBI" id="CHEBI:29105"/>
        <label>2</label>
    </ligand>
</feature>
<accession>A6T3L2</accession>
<protein>
    <recommendedName>
        <fullName evidence="1">DNA-directed RNA polymerase subunit beta'</fullName>
        <shortName evidence="1">RNAP subunit beta'</shortName>
        <ecNumber evidence="1">2.7.7.6</ecNumber>
    </recommendedName>
    <alternativeName>
        <fullName evidence="1">RNA polymerase subunit beta'</fullName>
    </alternativeName>
    <alternativeName>
        <fullName evidence="1">Transcriptase subunit beta'</fullName>
    </alternativeName>
</protein>
<dbReference type="EC" id="2.7.7.6" evidence="1"/>
<dbReference type="EMBL" id="CP000269">
    <property type="protein sequence ID" value="ABR89599.1"/>
    <property type="molecule type" value="Genomic_DNA"/>
</dbReference>
<dbReference type="RefSeq" id="WP_012081256.1">
    <property type="nucleotide sequence ID" value="NC_009659.1"/>
</dbReference>
<dbReference type="SMR" id="A6T3L2"/>
<dbReference type="STRING" id="375286.mma_3419"/>
<dbReference type="KEGG" id="mms:mma_3419"/>
<dbReference type="eggNOG" id="COG0086">
    <property type="taxonomic scope" value="Bacteria"/>
</dbReference>
<dbReference type="HOGENOM" id="CLU_000524_3_1_4"/>
<dbReference type="OrthoDB" id="9815296at2"/>
<dbReference type="Proteomes" id="UP000006388">
    <property type="component" value="Chromosome"/>
</dbReference>
<dbReference type="GO" id="GO:0000428">
    <property type="term" value="C:DNA-directed RNA polymerase complex"/>
    <property type="evidence" value="ECO:0007669"/>
    <property type="project" value="UniProtKB-KW"/>
</dbReference>
<dbReference type="GO" id="GO:0003677">
    <property type="term" value="F:DNA binding"/>
    <property type="evidence" value="ECO:0007669"/>
    <property type="project" value="UniProtKB-UniRule"/>
</dbReference>
<dbReference type="GO" id="GO:0003899">
    <property type="term" value="F:DNA-directed RNA polymerase activity"/>
    <property type="evidence" value="ECO:0007669"/>
    <property type="project" value="UniProtKB-UniRule"/>
</dbReference>
<dbReference type="GO" id="GO:0000287">
    <property type="term" value="F:magnesium ion binding"/>
    <property type="evidence" value="ECO:0007669"/>
    <property type="project" value="UniProtKB-UniRule"/>
</dbReference>
<dbReference type="GO" id="GO:0008270">
    <property type="term" value="F:zinc ion binding"/>
    <property type="evidence" value="ECO:0007669"/>
    <property type="project" value="UniProtKB-UniRule"/>
</dbReference>
<dbReference type="GO" id="GO:0006351">
    <property type="term" value="P:DNA-templated transcription"/>
    <property type="evidence" value="ECO:0007669"/>
    <property type="project" value="UniProtKB-UniRule"/>
</dbReference>
<dbReference type="CDD" id="cd02655">
    <property type="entry name" value="RNAP_beta'_C"/>
    <property type="match status" value="1"/>
</dbReference>
<dbReference type="CDD" id="cd01609">
    <property type="entry name" value="RNAP_beta'_N"/>
    <property type="match status" value="1"/>
</dbReference>
<dbReference type="FunFam" id="1.10.132.30:FF:000003">
    <property type="entry name" value="DNA-directed RNA polymerase subunit beta"/>
    <property type="match status" value="1"/>
</dbReference>
<dbReference type="FunFam" id="1.10.150.390:FF:000002">
    <property type="entry name" value="DNA-directed RNA polymerase subunit beta"/>
    <property type="match status" value="1"/>
</dbReference>
<dbReference type="FunFam" id="4.10.860.120:FF:000001">
    <property type="entry name" value="DNA-directed RNA polymerase subunit beta"/>
    <property type="match status" value="1"/>
</dbReference>
<dbReference type="Gene3D" id="1.10.132.30">
    <property type="match status" value="1"/>
</dbReference>
<dbReference type="Gene3D" id="1.10.150.390">
    <property type="match status" value="1"/>
</dbReference>
<dbReference type="Gene3D" id="1.10.1790.20">
    <property type="match status" value="1"/>
</dbReference>
<dbReference type="Gene3D" id="1.10.40.90">
    <property type="match status" value="1"/>
</dbReference>
<dbReference type="Gene3D" id="2.40.40.20">
    <property type="match status" value="1"/>
</dbReference>
<dbReference type="Gene3D" id="2.40.50.100">
    <property type="match status" value="3"/>
</dbReference>
<dbReference type="Gene3D" id="4.10.860.120">
    <property type="entry name" value="RNA polymerase II, clamp domain"/>
    <property type="match status" value="1"/>
</dbReference>
<dbReference type="Gene3D" id="1.10.274.100">
    <property type="entry name" value="RNA polymerase Rpb1, domain 3"/>
    <property type="match status" value="1"/>
</dbReference>
<dbReference type="HAMAP" id="MF_01322">
    <property type="entry name" value="RNApol_bact_RpoC"/>
    <property type="match status" value="1"/>
</dbReference>
<dbReference type="InterPro" id="IPR045867">
    <property type="entry name" value="DNA-dir_RpoC_beta_prime"/>
</dbReference>
<dbReference type="InterPro" id="IPR012754">
    <property type="entry name" value="DNA-dir_RpoC_beta_prime_bact"/>
</dbReference>
<dbReference type="InterPro" id="IPR000722">
    <property type="entry name" value="RNA_pol_asu"/>
</dbReference>
<dbReference type="InterPro" id="IPR006592">
    <property type="entry name" value="RNA_pol_N"/>
</dbReference>
<dbReference type="InterPro" id="IPR007080">
    <property type="entry name" value="RNA_pol_Rpb1_1"/>
</dbReference>
<dbReference type="InterPro" id="IPR007066">
    <property type="entry name" value="RNA_pol_Rpb1_3"/>
</dbReference>
<dbReference type="InterPro" id="IPR042102">
    <property type="entry name" value="RNA_pol_Rpb1_3_sf"/>
</dbReference>
<dbReference type="InterPro" id="IPR007083">
    <property type="entry name" value="RNA_pol_Rpb1_4"/>
</dbReference>
<dbReference type="InterPro" id="IPR007081">
    <property type="entry name" value="RNA_pol_Rpb1_5"/>
</dbReference>
<dbReference type="InterPro" id="IPR044893">
    <property type="entry name" value="RNA_pol_Rpb1_clamp_domain"/>
</dbReference>
<dbReference type="InterPro" id="IPR038120">
    <property type="entry name" value="Rpb1_funnel_sf"/>
</dbReference>
<dbReference type="NCBIfam" id="TIGR02386">
    <property type="entry name" value="rpoC_TIGR"/>
    <property type="match status" value="1"/>
</dbReference>
<dbReference type="PANTHER" id="PTHR19376">
    <property type="entry name" value="DNA-DIRECTED RNA POLYMERASE"/>
    <property type="match status" value="1"/>
</dbReference>
<dbReference type="PANTHER" id="PTHR19376:SF54">
    <property type="entry name" value="DNA-DIRECTED RNA POLYMERASE SUBUNIT BETA"/>
    <property type="match status" value="1"/>
</dbReference>
<dbReference type="Pfam" id="PF04997">
    <property type="entry name" value="RNA_pol_Rpb1_1"/>
    <property type="match status" value="1"/>
</dbReference>
<dbReference type="Pfam" id="PF00623">
    <property type="entry name" value="RNA_pol_Rpb1_2"/>
    <property type="match status" value="2"/>
</dbReference>
<dbReference type="Pfam" id="PF04983">
    <property type="entry name" value="RNA_pol_Rpb1_3"/>
    <property type="match status" value="1"/>
</dbReference>
<dbReference type="Pfam" id="PF05000">
    <property type="entry name" value="RNA_pol_Rpb1_4"/>
    <property type="match status" value="1"/>
</dbReference>
<dbReference type="Pfam" id="PF04998">
    <property type="entry name" value="RNA_pol_Rpb1_5"/>
    <property type="match status" value="1"/>
</dbReference>
<dbReference type="SMART" id="SM00663">
    <property type="entry name" value="RPOLA_N"/>
    <property type="match status" value="1"/>
</dbReference>
<dbReference type="SUPFAM" id="SSF64484">
    <property type="entry name" value="beta and beta-prime subunits of DNA dependent RNA-polymerase"/>
    <property type="match status" value="1"/>
</dbReference>
<gene>
    <name evidence="1" type="primary">rpoC</name>
    <name type="ordered locus">mma_3419</name>
</gene>
<sequence length="1414" mass="156122">MKALLDLFKQVQQNEQFDAIKIGLASPEKIRSWSYGEVKKPETINYRTFKPERDGLFCAKIFGPIKDYECLCGKYKRLKHRGVICEKCGVEVTLAKVRRERMGHIELASPTAHIWFLKSLPSRLGMVLDMTLRDIERVLYFEAYVVTDPGMTPLKKCQIMSEDDYAAKYEEFGDDFTAFMGAEGIRELLRAIDIDRDAEMLRQELKDSKSEAKIKKYAKRLKVLEAFQRSGIKPDWMIMEVLPVLPPELRPLVPLDGGRFATSDLNDLYRRVINRNNRLKRLMELRAPEIITRNEKRMLQEAVDSLLDNGRRGKAMTGANKRPLKSLAEMIKGKGGRFRQNLLGKRVDYSGRSVIVVGPQLKLHQCGLPKLMALELFKPFIFNKLELMGLATTIKAAKKLVEIQEPVVWDILEDVIREHPVMLNRAPTLHRLGIQAFEPVLIEGKAIQLHPLVCAAFNADFDGDQMAVHVPLSIEAQMEARTLMLASNNILFPSNGEPSIVPSQDIVLGLYYASREAINAKGEGMMFPDVSEVIRAYDNKMVELATRITVRITEYPKNVETGEFEKTVTRYETTVGRAILSEILPKGLPFSVLNRALKKKEISRLINLSFRKCGLRATVVFADQLLQSGFRLATRAGISICVDDMLVPKQKVDIIATAESEVKQIEQQYSSGLVTAGERYNKVVDIWGKAGDDVGKAMMDQLKVEDVTKRDGTKTTQESFNAIYMMADSGARGSAAQIRQLAGMRGLMAKPDGSIIETPITANFREGLNVLQYFISTHGARKGLADTALKTANSGYLTRRLVDVTQDLVVIEDDCGTSNGASMKALVEGGEVIEALRDRILGRVAANDIVNPETQATLYAAGTLLDEDMVEEIERLGIDEVKVRTPLTCDTRFGLCAQCYGRDLGRGTLVNAGEAVGVVAAQSIGEPGTQLTMRTFHIGGAASRAAVASSVEAKSNGTVRFTATMRYVTNGKGGQIVISRSGEVLITDDHGRERERHKVPYGATLIVKDGMVIKAGTALATWDPLTRPIITEYTGTVKFENVEEGSTVARQIDEVTGLSTLVVIDAKRRGSVTKTVRPQVKLLNEQGEEVKIAGTEHAVTIGFQVGALITVKDGQQVTVGEVLARIPTESQKTRDITGGLPRVAELFEARSPKDAGMLAEVTGTVAFGKETKGKQRLEITDMDGNKHEFLITKDKQVLVHDGQVVNKGEMIVDGPADPQDILRLLGIEALARYIVDEVQDVYRLQGVKINDKHIEVIVRQMLRRVQVVDAGDANYIVGEQVERSELLDENDRVIALGKIPATYENVLLGITKASLSTDSFISAASFQETTRVLTEAAIMGKKDGLRGLKENVIVGRLIPAGTGLAFHRARKEKDSWEAEERAALLQSEKAARAAEAEAQFADVSSTPDSDTDAS</sequence>
<evidence type="ECO:0000255" key="1">
    <source>
        <dbReference type="HAMAP-Rule" id="MF_01322"/>
    </source>
</evidence>
<evidence type="ECO:0000256" key="2">
    <source>
        <dbReference type="SAM" id="MobiDB-lite"/>
    </source>
</evidence>
<keyword id="KW-0240">DNA-directed RNA polymerase</keyword>
<keyword id="KW-0460">Magnesium</keyword>
<keyword id="KW-0479">Metal-binding</keyword>
<keyword id="KW-0548">Nucleotidyltransferase</keyword>
<keyword id="KW-0804">Transcription</keyword>
<keyword id="KW-0808">Transferase</keyword>
<keyword id="KW-0862">Zinc</keyword>
<organism>
    <name type="scientific">Janthinobacterium sp. (strain Marseille)</name>
    <name type="common">Minibacterium massiliensis</name>
    <dbReference type="NCBI Taxonomy" id="375286"/>
    <lineage>
        <taxon>Bacteria</taxon>
        <taxon>Pseudomonadati</taxon>
        <taxon>Pseudomonadota</taxon>
        <taxon>Betaproteobacteria</taxon>
        <taxon>Burkholderiales</taxon>
        <taxon>Oxalobacteraceae</taxon>
        <taxon>Janthinobacterium</taxon>
    </lineage>
</organism>
<comment type="function">
    <text evidence="1">DNA-dependent RNA polymerase catalyzes the transcription of DNA into RNA using the four ribonucleoside triphosphates as substrates.</text>
</comment>
<comment type="catalytic activity">
    <reaction evidence="1">
        <text>RNA(n) + a ribonucleoside 5'-triphosphate = RNA(n+1) + diphosphate</text>
        <dbReference type="Rhea" id="RHEA:21248"/>
        <dbReference type="Rhea" id="RHEA-COMP:14527"/>
        <dbReference type="Rhea" id="RHEA-COMP:17342"/>
        <dbReference type="ChEBI" id="CHEBI:33019"/>
        <dbReference type="ChEBI" id="CHEBI:61557"/>
        <dbReference type="ChEBI" id="CHEBI:140395"/>
        <dbReference type="EC" id="2.7.7.6"/>
    </reaction>
</comment>
<comment type="cofactor">
    <cofactor evidence="1">
        <name>Mg(2+)</name>
        <dbReference type="ChEBI" id="CHEBI:18420"/>
    </cofactor>
    <text evidence="1">Binds 1 Mg(2+) ion per subunit.</text>
</comment>
<comment type="cofactor">
    <cofactor evidence="1">
        <name>Zn(2+)</name>
        <dbReference type="ChEBI" id="CHEBI:29105"/>
    </cofactor>
    <text evidence="1">Binds 2 Zn(2+) ions per subunit.</text>
</comment>
<comment type="subunit">
    <text evidence="1">The RNAP catalytic core consists of 2 alpha, 1 beta, 1 beta' and 1 omega subunit. When a sigma factor is associated with the core the holoenzyme is formed, which can initiate transcription.</text>
</comment>
<comment type="similarity">
    <text evidence="1">Belongs to the RNA polymerase beta' chain family.</text>
</comment>